<gene>
    <name type="primary">uck1-b</name>
</gene>
<proteinExistence type="evidence at transcript level"/>
<protein>
    <recommendedName>
        <fullName>Uridine-cytidine kinase 1-B</fullName>
        <shortName>UCK 1-B</shortName>
        <ecNumber evidence="2">2.7.1.48</ecNumber>
    </recommendedName>
    <alternativeName>
        <fullName>Cytidine monophosphokinase 1-B</fullName>
    </alternativeName>
    <alternativeName>
        <fullName>Uridine monophosphokinase 1-B</fullName>
    </alternativeName>
</protein>
<organism>
    <name type="scientific">Xenopus laevis</name>
    <name type="common">African clawed frog</name>
    <dbReference type="NCBI Taxonomy" id="8355"/>
    <lineage>
        <taxon>Eukaryota</taxon>
        <taxon>Metazoa</taxon>
        <taxon>Chordata</taxon>
        <taxon>Craniata</taxon>
        <taxon>Vertebrata</taxon>
        <taxon>Euteleostomi</taxon>
        <taxon>Amphibia</taxon>
        <taxon>Batrachia</taxon>
        <taxon>Anura</taxon>
        <taxon>Pipoidea</taxon>
        <taxon>Pipidae</taxon>
        <taxon>Xenopodinae</taxon>
        <taxon>Xenopus</taxon>
        <taxon>Xenopus</taxon>
    </lineage>
</organism>
<comment type="function">
    <text evidence="2">Phosphorylates uridine and cytidine to uridine monophosphate and cytidine monophosphate. Does not phosphorylate deoxyribonucleosides or purine ribonucleosides. Can use ATP or GTP as a phosphate donor.</text>
</comment>
<comment type="catalytic activity">
    <reaction evidence="2">
        <text>uridine + ATP = UMP + ADP + H(+)</text>
        <dbReference type="Rhea" id="RHEA:16825"/>
        <dbReference type="ChEBI" id="CHEBI:15378"/>
        <dbReference type="ChEBI" id="CHEBI:16704"/>
        <dbReference type="ChEBI" id="CHEBI:30616"/>
        <dbReference type="ChEBI" id="CHEBI:57865"/>
        <dbReference type="ChEBI" id="CHEBI:456216"/>
        <dbReference type="EC" id="2.7.1.48"/>
    </reaction>
</comment>
<comment type="catalytic activity">
    <reaction evidence="2">
        <text>cytidine + ATP = CMP + ADP + H(+)</text>
        <dbReference type="Rhea" id="RHEA:24674"/>
        <dbReference type="ChEBI" id="CHEBI:15378"/>
        <dbReference type="ChEBI" id="CHEBI:17562"/>
        <dbReference type="ChEBI" id="CHEBI:30616"/>
        <dbReference type="ChEBI" id="CHEBI:60377"/>
        <dbReference type="ChEBI" id="CHEBI:456216"/>
        <dbReference type="EC" id="2.7.1.48"/>
    </reaction>
</comment>
<comment type="pathway">
    <text evidence="2">Pyrimidine metabolism; CTP biosynthesis via salvage pathway; CTP from cytidine: step 1/3.</text>
</comment>
<comment type="pathway">
    <text evidence="2">Pyrimidine metabolism; UMP biosynthesis via salvage pathway; UMP from uridine: step 1/1.</text>
</comment>
<comment type="similarity">
    <text evidence="4">Belongs to the uridine kinase family.</text>
</comment>
<dbReference type="EC" id="2.7.1.48" evidence="2"/>
<dbReference type="EMBL" id="BC073200">
    <property type="protein sequence ID" value="AAH73200.1"/>
    <property type="molecule type" value="mRNA"/>
</dbReference>
<dbReference type="RefSeq" id="NP_001085688.1">
    <property type="nucleotide sequence ID" value="NM_001092219.1"/>
</dbReference>
<dbReference type="SMR" id="Q6GPD9"/>
<dbReference type="DNASU" id="444114"/>
<dbReference type="GeneID" id="444114"/>
<dbReference type="KEGG" id="xla:444114"/>
<dbReference type="CTD" id="444114"/>
<dbReference type="OrthoDB" id="10257085at2759"/>
<dbReference type="UniPathway" id="UPA00574">
    <property type="reaction ID" value="UER00637"/>
</dbReference>
<dbReference type="UniPathway" id="UPA00579">
    <property type="reaction ID" value="UER00640"/>
</dbReference>
<dbReference type="Proteomes" id="UP000186698">
    <property type="component" value="Chromosome 8L"/>
</dbReference>
<dbReference type="Bgee" id="444114">
    <property type="expression patterns" value="Expressed in oocyte and 19 other cell types or tissues"/>
</dbReference>
<dbReference type="GO" id="GO:0005737">
    <property type="term" value="C:cytoplasm"/>
    <property type="evidence" value="ECO:0000318"/>
    <property type="project" value="GO_Central"/>
</dbReference>
<dbReference type="GO" id="GO:0005524">
    <property type="term" value="F:ATP binding"/>
    <property type="evidence" value="ECO:0007669"/>
    <property type="project" value="UniProtKB-KW"/>
</dbReference>
<dbReference type="GO" id="GO:0043771">
    <property type="term" value="F:cytidine kinase activity"/>
    <property type="evidence" value="ECO:0000250"/>
    <property type="project" value="UniProtKB"/>
</dbReference>
<dbReference type="GO" id="GO:0004849">
    <property type="term" value="F:uridine kinase activity"/>
    <property type="evidence" value="ECO:0000250"/>
    <property type="project" value="UniProtKB"/>
</dbReference>
<dbReference type="GO" id="GO:0044211">
    <property type="term" value="P:CTP salvage"/>
    <property type="evidence" value="ECO:0000250"/>
    <property type="project" value="UniProtKB"/>
</dbReference>
<dbReference type="GO" id="GO:0044206">
    <property type="term" value="P:UMP salvage"/>
    <property type="evidence" value="ECO:0000250"/>
    <property type="project" value="UniProtKB"/>
</dbReference>
<dbReference type="CDD" id="cd02023">
    <property type="entry name" value="UMPK"/>
    <property type="match status" value="1"/>
</dbReference>
<dbReference type="FunFam" id="3.40.50.300:FF:000297">
    <property type="entry name" value="Uridine-cytidine kinase 2"/>
    <property type="match status" value="1"/>
</dbReference>
<dbReference type="Gene3D" id="3.40.50.300">
    <property type="entry name" value="P-loop containing nucleotide triphosphate hydrolases"/>
    <property type="match status" value="1"/>
</dbReference>
<dbReference type="InterPro" id="IPR027417">
    <property type="entry name" value="P-loop_NTPase"/>
</dbReference>
<dbReference type="InterPro" id="IPR006083">
    <property type="entry name" value="PRK/URK"/>
</dbReference>
<dbReference type="InterPro" id="IPR000764">
    <property type="entry name" value="Uridine_kinase-like"/>
</dbReference>
<dbReference type="NCBIfam" id="NF004018">
    <property type="entry name" value="PRK05480.1"/>
    <property type="match status" value="1"/>
</dbReference>
<dbReference type="NCBIfam" id="TIGR00235">
    <property type="entry name" value="udk"/>
    <property type="match status" value="1"/>
</dbReference>
<dbReference type="PANTHER" id="PTHR10285">
    <property type="entry name" value="URIDINE KINASE"/>
    <property type="match status" value="1"/>
</dbReference>
<dbReference type="Pfam" id="PF00485">
    <property type="entry name" value="PRK"/>
    <property type="match status" value="1"/>
</dbReference>
<dbReference type="PRINTS" id="PR00988">
    <property type="entry name" value="URIDINKINASE"/>
</dbReference>
<dbReference type="SUPFAM" id="SSF52540">
    <property type="entry name" value="P-loop containing nucleoside triphosphate hydrolases"/>
    <property type="match status" value="1"/>
</dbReference>
<accession>Q6GPD9</accession>
<name>UCK1B_XENLA</name>
<reference key="1">
    <citation type="submission" date="2004-06" db="EMBL/GenBank/DDBJ databases">
        <authorList>
            <consortium name="NIH - Xenopus Gene Collection (XGC) project"/>
        </authorList>
    </citation>
    <scope>NUCLEOTIDE SEQUENCE [LARGE SCALE MRNA]</scope>
    <source>
        <tissue>Embryo</tissue>
    </source>
</reference>
<sequence length="271" mass="30745">MASAGSLDVPERGHQRPFLIGVSGGTASGKSTVCEKIMELLGQNEVDHRQRKVVILSQDRFYKVLTPEQKARALKGQYNFDHPDAFDNELMDRTLTQILDGQIVAVPMYDFITHSRLPETTTVYPADVVLFEGILAFYNQEIRDMFQLKLFVDTDSDVRLSRRVLRDMKRGRDLEQILTQYTTFVKPAFEEFSLPTKKYADVIIPRGVDNMVAINLIVQHIQDILNGDICKWQRGVQNGRSQKRTLPGQGDSGGLLLQGKRTHLESSSRPH</sequence>
<feature type="chain" id="PRO_0000346103" description="Uridine-cytidine kinase 1-B">
    <location>
        <begin position="1"/>
        <end position="271"/>
    </location>
</feature>
<feature type="region of interest" description="Disordered" evidence="3">
    <location>
        <begin position="240"/>
        <end position="271"/>
    </location>
</feature>
<feature type="compositionally biased region" description="Low complexity" evidence="3">
    <location>
        <begin position="246"/>
        <end position="259"/>
    </location>
</feature>
<feature type="compositionally biased region" description="Basic and acidic residues" evidence="3">
    <location>
        <begin position="262"/>
        <end position="271"/>
    </location>
</feature>
<feature type="binding site" evidence="2">
    <location>
        <begin position="24"/>
        <end position="32"/>
    </location>
    <ligand>
        <name>ATP</name>
        <dbReference type="ChEBI" id="CHEBI:30616"/>
    </ligand>
</feature>
<feature type="binding site" evidence="1">
    <location>
        <position position="81"/>
    </location>
    <ligand>
        <name>substrate</name>
    </ligand>
</feature>
<feature type="binding site" evidence="1">
    <location>
        <position position="109"/>
    </location>
    <ligand>
        <name>substrate</name>
    </ligand>
</feature>
<feature type="binding site" evidence="1">
    <location>
        <position position="114"/>
    </location>
    <ligand>
        <name>substrate</name>
    </ligand>
</feature>
<feature type="binding site" evidence="1">
    <location>
        <position position="163"/>
    </location>
    <ligand>
        <name>substrate</name>
    </ligand>
</feature>
<feature type="binding site" evidence="1">
    <location>
        <position position="172"/>
    </location>
    <ligand>
        <name>substrate</name>
    </ligand>
</feature>
<feature type="binding site" evidence="1">
    <location>
        <position position="180"/>
    </location>
    <ligand>
        <name>substrate</name>
    </ligand>
</feature>
<feature type="binding site" evidence="2">
    <location>
        <position position="209"/>
    </location>
    <ligand>
        <name>ATP</name>
        <dbReference type="ChEBI" id="CHEBI:30616"/>
    </ligand>
</feature>
<keyword id="KW-0067">ATP-binding</keyword>
<keyword id="KW-0418">Kinase</keyword>
<keyword id="KW-0547">Nucleotide-binding</keyword>
<keyword id="KW-1185">Reference proteome</keyword>
<keyword id="KW-0808">Transferase</keyword>
<evidence type="ECO:0000250" key="1">
    <source>
        <dbReference type="UniProtKB" id="Q9BZX2"/>
    </source>
</evidence>
<evidence type="ECO:0000250" key="2">
    <source>
        <dbReference type="UniProtKB" id="Q9HA47"/>
    </source>
</evidence>
<evidence type="ECO:0000256" key="3">
    <source>
        <dbReference type="SAM" id="MobiDB-lite"/>
    </source>
</evidence>
<evidence type="ECO:0000305" key="4"/>